<evidence type="ECO:0000250" key="1">
    <source>
        <dbReference type="UniProtKB" id="Q5VV42"/>
    </source>
</evidence>
<evidence type="ECO:0000255" key="2">
    <source>
        <dbReference type="PROSITE-ProRule" id="PRU00208"/>
    </source>
</evidence>
<evidence type="ECO:0000255" key="3">
    <source>
        <dbReference type="PROSITE-ProRule" id="PRU00780"/>
    </source>
</evidence>
<evidence type="ECO:0000255" key="4">
    <source>
        <dbReference type="PROSITE-ProRule" id="PRU01266"/>
    </source>
</evidence>
<evidence type="ECO:0000305" key="5"/>
<comment type="function">
    <text evidence="1">Catalyzes the methylthiolation of N6-threonylcarbamoyladenosine (t(6)A), leading to the formation of 2-methylthio-N6-threonylcarbamoyladenosine (ms(2)t(6)A) at position 37 in tRNAs that read codons beginning with adenine.</text>
</comment>
<comment type="catalytic activity">
    <reaction evidence="1">
        <text>N(6)-L-threonylcarbamoyladenosine(37) in tRNA + (sulfur carrier)-SH + AH2 + 2 S-adenosyl-L-methionine = 2-methylsulfanyl-N(6)-L-threonylcarbamoyladenosine(37) in tRNA + (sulfur carrier)-H + 5'-deoxyadenosine + L-methionine + A + S-adenosyl-L-homocysteine + 2 H(+)</text>
        <dbReference type="Rhea" id="RHEA:37075"/>
        <dbReference type="Rhea" id="RHEA-COMP:10163"/>
        <dbReference type="Rhea" id="RHEA-COMP:11092"/>
        <dbReference type="Rhea" id="RHEA-COMP:14737"/>
        <dbReference type="Rhea" id="RHEA-COMP:14739"/>
        <dbReference type="ChEBI" id="CHEBI:13193"/>
        <dbReference type="ChEBI" id="CHEBI:15378"/>
        <dbReference type="ChEBI" id="CHEBI:17319"/>
        <dbReference type="ChEBI" id="CHEBI:17499"/>
        <dbReference type="ChEBI" id="CHEBI:29917"/>
        <dbReference type="ChEBI" id="CHEBI:57844"/>
        <dbReference type="ChEBI" id="CHEBI:57856"/>
        <dbReference type="ChEBI" id="CHEBI:59789"/>
        <dbReference type="ChEBI" id="CHEBI:64428"/>
        <dbReference type="ChEBI" id="CHEBI:74418"/>
        <dbReference type="ChEBI" id="CHEBI:74420"/>
        <dbReference type="EC" id="2.8.4.5"/>
    </reaction>
</comment>
<comment type="cofactor">
    <cofactor evidence="3">
        <name>[4Fe-4S] cluster</name>
        <dbReference type="ChEBI" id="CHEBI:49883"/>
    </cofactor>
    <text evidence="3">Binds 2 [4Fe-4S] clusters. One cluster is coordinated with 3 cysteines and an exchangeable S-adenosyl-L-methionine.</text>
</comment>
<comment type="similarity">
    <text evidence="5">Belongs to the methylthiotransferase family. CDKAL1 subfamily.</text>
</comment>
<reference key="1">
    <citation type="journal article" date="2003" name="Mol. Microbiol.">
        <title>An integrated analysis of the genome of the hyperthermophilic archaeon Pyrococcus abyssi.</title>
        <authorList>
            <person name="Cohen G.N."/>
            <person name="Barbe V."/>
            <person name="Flament D."/>
            <person name="Galperin M."/>
            <person name="Heilig R."/>
            <person name="Lecompte O."/>
            <person name="Poch O."/>
            <person name="Prieur D."/>
            <person name="Querellou J."/>
            <person name="Ripp R."/>
            <person name="Thierry J.-C."/>
            <person name="Van der Oost J."/>
            <person name="Weissenbach J."/>
            <person name="Zivanovic Y."/>
            <person name="Forterre P."/>
        </authorList>
    </citation>
    <scope>NUCLEOTIDE SEQUENCE [LARGE SCALE GENOMIC DNA]</scope>
    <source>
        <strain>GE5 / Orsay</strain>
    </source>
</reference>
<reference key="2">
    <citation type="journal article" date="2012" name="Curr. Microbiol.">
        <title>Re-annotation of two hyperthermophilic archaea Pyrococcus abyssi GE5 and Pyrococcus furiosus DSM 3638.</title>
        <authorList>
            <person name="Gao J."/>
            <person name="Wang J."/>
        </authorList>
    </citation>
    <scope>GENOME REANNOTATION</scope>
    <source>
        <strain>GE5 / Orsay</strain>
    </source>
</reference>
<name>AMTAB_PYRAB</name>
<accession>Q9UXX9</accession>
<accession>G8ZK95</accession>
<proteinExistence type="inferred from homology"/>
<sequence>MVKIYIENYGCARNRADGEIMAALLHLAGHEIVYDPDEGEIVVVNSCAVKDPTERKIARRIKELLDSGKKVIVTGCLPHVNPDVIDERVSGILGVKSIDRIIQAVEYALRGEKLISVPDWRKRNLDKLDFPRLSPRTVYFIVPIAEGCLNACTYCATRFARGVLKSYSPEKIVGWVKWAIKQGYKEIWLSAEDTGCYGFDIGTNLAKLLDEITAIEGEFRVRVGMMNPNHVLKFLDELIEAYQDEKIYKFLHLPVQSGDNDILRRMGRNYTVEEFEEIVKEFRKKFPDLNLHTDIIVGFPGEDDEAFQRSVELIRRIRPDKVNVSRYSPRPGTIAAKWKQLPGWIVKERSRLLHRIRLQISYEINQKYIGKKVEVLIHGEGKKGNVDAVTMNYKHVILPFGNSGEFRIAEIKNATSTYLLGEVMS</sequence>
<dbReference type="EC" id="2.8.4.5"/>
<dbReference type="EMBL" id="AJ248288">
    <property type="protein sequence ID" value="CAB50634.1"/>
    <property type="molecule type" value="Genomic_DNA"/>
</dbReference>
<dbReference type="EMBL" id="HE613800">
    <property type="protein sequence ID" value="CCE71202.1"/>
    <property type="molecule type" value="Genomic_DNA"/>
</dbReference>
<dbReference type="PIR" id="D75024">
    <property type="entry name" value="D75024"/>
</dbReference>
<dbReference type="RefSeq" id="WP_010868848.1">
    <property type="nucleotide sequence ID" value="NC_000868.1"/>
</dbReference>
<dbReference type="SMR" id="Q9UXX9"/>
<dbReference type="STRING" id="272844.PAB1134"/>
<dbReference type="KEGG" id="pab:PAB1134"/>
<dbReference type="PATRIC" id="fig|272844.11.peg.1847"/>
<dbReference type="eggNOG" id="arCOG01358">
    <property type="taxonomic scope" value="Archaea"/>
</dbReference>
<dbReference type="HOGENOM" id="CLU_018697_4_2_2"/>
<dbReference type="OrthoDB" id="372134at2157"/>
<dbReference type="PhylomeDB" id="Q9UXX9"/>
<dbReference type="Proteomes" id="UP000000810">
    <property type="component" value="Chromosome"/>
</dbReference>
<dbReference type="Proteomes" id="UP000009139">
    <property type="component" value="Chromosome"/>
</dbReference>
<dbReference type="GO" id="GO:0051539">
    <property type="term" value="F:4 iron, 4 sulfur cluster binding"/>
    <property type="evidence" value="ECO:0007669"/>
    <property type="project" value="UniProtKB-KW"/>
</dbReference>
<dbReference type="GO" id="GO:0046872">
    <property type="term" value="F:metal ion binding"/>
    <property type="evidence" value="ECO:0007669"/>
    <property type="project" value="UniProtKB-KW"/>
</dbReference>
<dbReference type="GO" id="GO:0035598">
    <property type="term" value="F:N6-threonylcarbomyladenosine methylthiotransferase activity"/>
    <property type="evidence" value="ECO:0007669"/>
    <property type="project" value="InterPro"/>
</dbReference>
<dbReference type="GO" id="GO:0061712">
    <property type="term" value="F:tRNA (N(6)-L-threonylcarbamoyladenosine(37)-C(2))-methylthiotransferase"/>
    <property type="evidence" value="ECO:0007669"/>
    <property type="project" value="UniProtKB-EC"/>
</dbReference>
<dbReference type="CDD" id="cd01335">
    <property type="entry name" value="Radical_SAM"/>
    <property type="match status" value="1"/>
</dbReference>
<dbReference type="FunFam" id="3.80.30.20:FF:000002">
    <property type="entry name" value="threonylcarbamoyladenosine tRNA methylthiotransferase isoform X2"/>
    <property type="match status" value="1"/>
</dbReference>
<dbReference type="Gene3D" id="3.40.50.12160">
    <property type="entry name" value="Methylthiotransferase, N-terminal domain"/>
    <property type="match status" value="1"/>
</dbReference>
<dbReference type="Gene3D" id="3.80.30.20">
    <property type="entry name" value="tm_1862 like domain"/>
    <property type="match status" value="1"/>
</dbReference>
<dbReference type="InterPro" id="IPR006638">
    <property type="entry name" value="Elp3/MiaA/NifB-like_rSAM"/>
</dbReference>
<dbReference type="InterPro" id="IPR005839">
    <property type="entry name" value="Methylthiotransferase"/>
</dbReference>
<dbReference type="InterPro" id="IPR020612">
    <property type="entry name" value="Methylthiotransferase_CS"/>
</dbReference>
<dbReference type="InterPro" id="IPR013848">
    <property type="entry name" value="Methylthiotransferase_N"/>
</dbReference>
<dbReference type="InterPro" id="IPR038135">
    <property type="entry name" value="Methylthiotransferase_N_sf"/>
</dbReference>
<dbReference type="InterPro" id="IPR006466">
    <property type="entry name" value="MiaB-like_arc_euk"/>
</dbReference>
<dbReference type="InterPro" id="IPR007197">
    <property type="entry name" value="rSAM"/>
</dbReference>
<dbReference type="InterPro" id="IPR023404">
    <property type="entry name" value="rSAM_horseshoe"/>
</dbReference>
<dbReference type="InterPro" id="IPR002792">
    <property type="entry name" value="TRAM_dom"/>
</dbReference>
<dbReference type="NCBIfam" id="TIGR01578">
    <property type="entry name" value="MiaB-like-B"/>
    <property type="match status" value="1"/>
</dbReference>
<dbReference type="NCBIfam" id="TIGR00089">
    <property type="entry name" value="MiaB/RimO family radical SAM methylthiotransferase"/>
    <property type="match status" value="1"/>
</dbReference>
<dbReference type="PANTHER" id="PTHR11918">
    <property type="entry name" value="RADICAL SAM PROTEINS"/>
    <property type="match status" value="1"/>
</dbReference>
<dbReference type="PANTHER" id="PTHR11918:SF45">
    <property type="entry name" value="THREONYLCARBAMOYLADENOSINE TRNA METHYLTHIOTRANSFERASE"/>
    <property type="match status" value="1"/>
</dbReference>
<dbReference type="Pfam" id="PF04055">
    <property type="entry name" value="Radical_SAM"/>
    <property type="match status" value="1"/>
</dbReference>
<dbReference type="Pfam" id="PF01938">
    <property type="entry name" value="TRAM"/>
    <property type="match status" value="1"/>
</dbReference>
<dbReference type="Pfam" id="PF00919">
    <property type="entry name" value="UPF0004"/>
    <property type="match status" value="1"/>
</dbReference>
<dbReference type="SFLD" id="SFLDG01082">
    <property type="entry name" value="B12-binding_domain_containing"/>
    <property type="match status" value="1"/>
</dbReference>
<dbReference type="SFLD" id="SFLDG01061">
    <property type="entry name" value="methylthiotransferase"/>
    <property type="match status" value="1"/>
</dbReference>
<dbReference type="SFLD" id="SFLDS00029">
    <property type="entry name" value="Radical_SAM"/>
    <property type="match status" value="1"/>
</dbReference>
<dbReference type="SMART" id="SM00729">
    <property type="entry name" value="Elp3"/>
    <property type="match status" value="1"/>
</dbReference>
<dbReference type="SUPFAM" id="SSF102114">
    <property type="entry name" value="Radical SAM enzymes"/>
    <property type="match status" value="1"/>
</dbReference>
<dbReference type="PROSITE" id="PS51449">
    <property type="entry name" value="MTTASE_N"/>
    <property type="match status" value="1"/>
</dbReference>
<dbReference type="PROSITE" id="PS01278">
    <property type="entry name" value="MTTASE_RADICAL"/>
    <property type="match status" value="1"/>
</dbReference>
<dbReference type="PROSITE" id="PS51918">
    <property type="entry name" value="RADICAL_SAM"/>
    <property type="match status" value="1"/>
</dbReference>
<dbReference type="PROSITE" id="PS50926">
    <property type="entry name" value="TRAM"/>
    <property type="match status" value="1"/>
</dbReference>
<feature type="chain" id="PRO_0000141762" description="Probable threonylcarbamoyladenosine tRNA methylthiotransferase">
    <location>
        <begin position="1"/>
        <end position="425"/>
    </location>
</feature>
<feature type="domain" description="MTTase N-terminal" evidence="3">
    <location>
        <begin position="2"/>
        <end position="110"/>
    </location>
</feature>
<feature type="domain" description="Radical SAM core" evidence="4">
    <location>
        <begin position="133"/>
        <end position="363"/>
    </location>
</feature>
<feature type="domain" description="TRAM" evidence="2">
    <location>
        <begin position="366"/>
        <end position="425"/>
    </location>
</feature>
<feature type="binding site" evidence="3">
    <location>
        <position position="11"/>
    </location>
    <ligand>
        <name>[4Fe-4S] cluster</name>
        <dbReference type="ChEBI" id="CHEBI:49883"/>
        <label>1</label>
    </ligand>
</feature>
<feature type="binding site" evidence="3">
    <location>
        <position position="47"/>
    </location>
    <ligand>
        <name>[4Fe-4S] cluster</name>
        <dbReference type="ChEBI" id="CHEBI:49883"/>
        <label>1</label>
    </ligand>
</feature>
<feature type="binding site" evidence="3">
    <location>
        <position position="76"/>
    </location>
    <ligand>
        <name>[4Fe-4S] cluster</name>
        <dbReference type="ChEBI" id="CHEBI:49883"/>
        <label>1</label>
    </ligand>
</feature>
<feature type="binding site" evidence="3">
    <location>
        <position position="148"/>
    </location>
    <ligand>
        <name>[4Fe-4S] cluster</name>
        <dbReference type="ChEBI" id="CHEBI:49883"/>
        <label>2</label>
        <note>4Fe-4S-S-AdoMet</note>
    </ligand>
</feature>
<feature type="binding site" evidence="3">
    <location>
        <position position="152"/>
    </location>
    <ligand>
        <name>[4Fe-4S] cluster</name>
        <dbReference type="ChEBI" id="CHEBI:49883"/>
        <label>2</label>
        <note>4Fe-4S-S-AdoMet</note>
    </ligand>
</feature>
<feature type="binding site" evidence="3">
    <location>
        <position position="155"/>
    </location>
    <ligand>
        <name>[4Fe-4S] cluster</name>
        <dbReference type="ChEBI" id="CHEBI:49883"/>
        <label>2</label>
        <note>4Fe-4S-S-AdoMet</note>
    </ligand>
</feature>
<gene>
    <name type="ordered locus">PYRAB17290</name>
    <name type="ORF">PAB1134</name>
</gene>
<keyword id="KW-0004">4Fe-4S</keyword>
<keyword id="KW-0408">Iron</keyword>
<keyword id="KW-0411">Iron-sulfur</keyword>
<keyword id="KW-0479">Metal-binding</keyword>
<keyword id="KW-0949">S-adenosyl-L-methionine</keyword>
<keyword id="KW-0808">Transferase</keyword>
<keyword id="KW-0819">tRNA processing</keyword>
<organism>
    <name type="scientific">Pyrococcus abyssi (strain GE5 / Orsay)</name>
    <dbReference type="NCBI Taxonomy" id="272844"/>
    <lineage>
        <taxon>Archaea</taxon>
        <taxon>Methanobacteriati</taxon>
        <taxon>Methanobacteriota</taxon>
        <taxon>Thermococci</taxon>
        <taxon>Thermococcales</taxon>
        <taxon>Thermococcaceae</taxon>
        <taxon>Pyrococcus</taxon>
    </lineage>
</organism>
<protein>
    <recommendedName>
        <fullName>Probable threonylcarbamoyladenosine tRNA methylthiotransferase</fullName>
        <ecNumber>2.8.4.5</ecNumber>
    </recommendedName>
    <alternativeName>
        <fullName>tRNA-t(6)A37 methylthiotransferase</fullName>
    </alternativeName>
</protein>